<feature type="chain" id="PRO_0000208843" description="Lysozyme C-1/C-2">
    <location>
        <begin position="1"/>
        <end position="129"/>
    </location>
</feature>
<feature type="domain" description="C-type lysozyme" evidence="1">
    <location>
        <begin position="1"/>
        <end position="129"/>
    </location>
</feature>
<feature type="active site" evidence="1">
    <location>
        <position position="35"/>
    </location>
</feature>
<feature type="active site" evidence="1">
    <location>
        <position position="53"/>
    </location>
</feature>
<feature type="disulfide bond" evidence="1">
    <location>
        <begin position="6"/>
        <end position="127"/>
    </location>
</feature>
<feature type="disulfide bond" evidence="1">
    <location>
        <begin position="30"/>
        <end position="115"/>
    </location>
</feature>
<feature type="disulfide bond" evidence="1">
    <location>
        <begin position="65"/>
        <end position="81"/>
    </location>
</feature>
<feature type="disulfide bond" evidence="1">
    <location>
        <begin position="77"/>
        <end position="95"/>
    </location>
</feature>
<feature type="sequence variant" description="In isozyme 2.">
    <original>D</original>
    <variation>N</variation>
    <location>
        <position position="66"/>
    </location>
</feature>
<feature type="sequence variant" description="In isozyme 2.">
    <original>N</original>
    <variation>D</variation>
    <location>
        <position position="88"/>
    </location>
</feature>
<feature type="sequence variant" description="In isozyme 2.">
    <original>D</original>
    <variation>A</variation>
    <location>
        <position position="90"/>
    </location>
</feature>
<feature type="sequence variant" description="In isozyme 2.">
    <original>T</original>
    <variation>A</variation>
    <location>
        <position position="94"/>
    </location>
</feature>
<feature type="sequence variant" description="In isozyme 2.">
    <original>G</original>
    <variation>H</variation>
    <location>
        <position position="117"/>
    </location>
</feature>
<organism>
    <name type="scientific">Axis axis</name>
    <name type="common">Axis deer</name>
    <name type="synonym">Chital</name>
    <dbReference type="NCBI Taxonomy" id="30531"/>
    <lineage>
        <taxon>Eukaryota</taxon>
        <taxon>Metazoa</taxon>
        <taxon>Chordata</taxon>
        <taxon>Craniata</taxon>
        <taxon>Vertebrata</taxon>
        <taxon>Euteleostomi</taxon>
        <taxon>Mammalia</taxon>
        <taxon>Eutheria</taxon>
        <taxon>Laurasiatheria</taxon>
        <taxon>Artiodactyla</taxon>
        <taxon>Ruminantia</taxon>
        <taxon>Pecora</taxon>
        <taxon>Cervidae</taxon>
        <taxon>Cervinae</taxon>
        <taxon>Axis</taxon>
    </lineage>
</organism>
<protein>
    <recommendedName>
        <fullName>Lysozyme C-1/C-2</fullName>
        <ecNumber>3.2.1.17</ecNumber>
    </recommendedName>
    <alternativeName>
        <fullName>1,4-beta-N-acetylmuramidase C</fullName>
    </alternativeName>
</protein>
<name>LYSC_AXIAX</name>
<keyword id="KW-0929">Antimicrobial</keyword>
<keyword id="KW-0081">Bacteriolytic enzyme</keyword>
<keyword id="KW-0222">Digestion</keyword>
<keyword id="KW-0903">Direct protein sequencing</keyword>
<keyword id="KW-1015">Disulfide bond</keyword>
<keyword id="KW-0326">Glycosidase</keyword>
<keyword id="KW-0378">Hydrolase</keyword>
<comment type="function">
    <text>Lysozymes have primarily a bacteriolytic function; those in tissues and body fluids are associated with the monocyte-macrophage system and enhance the activity of immunoagents.</text>
</comment>
<comment type="catalytic activity">
    <reaction>
        <text>Hydrolysis of (1-&gt;4)-beta-linkages between N-acetylmuramic acid and N-acetyl-D-glucosamine residues in a peptidoglycan and between N-acetyl-D-glucosamine residues in chitodextrins.</text>
        <dbReference type="EC" id="3.2.1.17"/>
    </reaction>
</comment>
<comment type="subunit">
    <text>Monomer.</text>
</comment>
<comment type="miscellaneous">
    <text>Lysozyme C is capable of both hydrolysis and transglycosylation; it also shows a slight esterase activity. It acts rapidly on both peptide-substituted and unsubstituted peptidoglycan, and slowly on chitin oligosaccharides.</text>
</comment>
<comment type="miscellaneous">
    <text>The sequence of isozyme 1 is shown.</text>
</comment>
<comment type="similarity">
    <text evidence="1">Belongs to the glycosyl hydrolase 22 family.</text>
</comment>
<sequence>KVFERCELARTLKELGLDGYKGVSLANWLCLTKWESSYNTKATNYNPGSESTDYGIFQINSKWWCDDGKTPNAVDGCHVACSELMENNIDKAVTCAKQIVREQGITAWVAWKSHCRGHDVSSYVEGCTL</sequence>
<proteinExistence type="evidence at protein level"/>
<evidence type="ECO:0000255" key="1">
    <source>
        <dbReference type="PROSITE-ProRule" id="PRU00680"/>
    </source>
</evidence>
<dbReference type="EC" id="3.2.1.17"/>
<dbReference type="EMBL" id="M32499">
    <property type="protein sequence ID" value="AAA30344.1"/>
    <property type="molecule type" value="mRNA"/>
</dbReference>
<dbReference type="EMBL" id="M32500">
    <property type="protein sequence ID" value="AAA30345.1"/>
    <property type="molecule type" value="mRNA"/>
</dbReference>
<dbReference type="PIR" id="G35558">
    <property type="entry name" value="G35558"/>
</dbReference>
<dbReference type="PIR" id="H35558">
    <property type="entry name" value="H35558"/>
</dbReference>
<dbReference type="SMR" id="P12066"/>
<dbReference type="CAZy" id="GH22">
    <property type="family name" value="Glycoside Hydrolase Family 22"/>
</dbReference>
<dbReference type="GO" id="GO:0003796">
    <property type="term" value="F:lysozyme activity"/>
    <property type="evidence" value="ECO:0007669"/>
    <property type="project" value="UniProtKB-EC"/>
</dbReference>
<dbReference type="GO" id="GO:0050829">
    <property type="term" value="P:defense response to Gram-negative bacterium"/>
    <property type="evidence" value="ECO:0007669"/>
    <property type="project" value="TreeGrafter"/>
</dbReference>
<dbReference type="GO" id="GO:0050830">
    <property type="term" value="P:defense response to Gram-positive bacterium"/>
    <property type="evidence" value="ECO:0007669"/>
    <property type="project" value="TreeGrafter"/>
</dbReference>
<dbReference type="GO" id="GO:0007586">
    <property type="term" value="P:digestion"/>
    <property type="evidence" value="ECO:0007669"/>
    <property type="project" value="UniProtKB-KW"/>
</dbReference>
<dbReference type="GO" id="GO:0031640">
    <property type="term" value="P:killing of cells of another organism"/>
    <property type="evidence" value="ECO:0007669"/>
    <property type="project" value="UniProtKB-KW"/>
</dbReference>
<dbReference type="CDD" id="cd16897">
    <property type="entry name" value="LYZ_C"/>
    <property type="match status" value="1"/>
</dbReference>
<dbReference type="FunFam" id="1.10.530.10:FF:000001">
    <property type="entry name" value="Lysozyme C"/>
    <property type="match status" value="1"/>
</dbReference>
<dbReference type="Gene3D" id="1.10.530.10">
    <property type="match status" value="1"/>
</dbReference>
<dbReference type="InterPro" id="IPR001916">
    <property type="entry name" value="Glyco_hydro_22"/>
</dbReference>
<dbReference type="InterPro" id="IPR019799">
    <property type="entry name" value="Glyco_hydro_22_CS"/>
</dbReference>
<dbReference type="InterPro" id="IPR000974">
    <property type="entry name" value="Glyco_hydro_22_lys"/>
</dbReference>
<dbReference type="InterPro" id="IPR023346">
    <property type="entry name" value="Lysozyme-like_dom_sf"/>
</dbReference>
<dbReference type="PANTHER" id="PTHR11407">
    <property type="entry name" value="LYSOZYME C"/>
    <property type="match status" value="1"/>
</dbReference>
<dbReference type="PANTHER" id="PTHR11407:SF28">
    <property type="entry name" value="LYSOZYME C"/>
    <property type="match status" value="1"/>
</dbReference>
<dbReference type="Pfam" id="PF00062">
    <property type="entry name" value="Lys"/>
    <property type="match status" value="1"/>
</dbReference>
<dbReference type="PRINTS" id="PR00137">
    <property type="entry name" value="LYSOZYME"/>
</dbReference>
<dbReference type="PRINTS" id="PR00135">
    <property type="entry name" value="LYZLACT"/>
</dbReference>
<dbReference type="SMART" id="SM00263">
    <property type="entry name" value="LYZ1"/>
    <property type="match status" value="1"/>
</dbReference>
<dbReference type="SUPFAM" id="SSF53955">
    <property type="entry name" value="Lysozyme-like"/>
    <property type="match status" value="1"/>
</dbReference>
<dbReference type="PROSITE" id="PS00128">
    <property type="entry name" value="GLYCOSYL_HYDROL_F22_1"/>
    <property type="match status" value="1"/>
</dbReference>
<dbReference type="PROSITE" id="PS51348">
    <property type="entry name" value="GLYCOSYL_HYDROL_F22_2"/>
    <property type="match status" value="1"/>
</dbReference>
<accession>P12066</accession>
<reference key="1">
    <citation type="journal article" date="1989" name="J. Mol. Evol.">
        <title>Episodic evolution in the stomach lysozymes of ruminants.</title>
        <authorList>
            <person name="Jolles J."/>
            <person name="Jolles P."/>
            <person name="Bowman B.H."/>
            <person name="Prager E.M."/>
            <person name="Stewart C.-B."/>
            <person name="Wilson A.C."/>
        </authorList>
    </citation>
    <scope>PROTEIN SEQUENCE</scope>
    <source>
        <tissue>Stomach</tissue>
    </source>
</reference>
<reference key="2">
    <citation type="journal article" date="1990" name="J. Biol. Chem.">
        <title>Concerted evolution of ruminant stomach lysozymes. Characterization of lysozyme cDNA clones from sheep and deer.</title>
        <authorList>
            <person name="Irwin D.M."/>
            <person name="Wilson A.C."/>
        </authorList>
    </citation>
    <scope>NUCLEOTIDE SEQUENCE [MRNA] (ISOZYMES 1 AND 2)</scope>
</reference>